<dbReference type="EC" id="5.1.1.1" evidence="1"/>
<dbReference type="EMBL" id="CP000388">
    <property type="protein sequence ID" value="ABG42524.1"/>
    <property type="molecule type" value="Genomic_DNA"/>
</dbReference>
<dbReference type="RefSeq" id="WP_011576723.1">
    <property type="nucleotide sequence ID" value="NC_008228.1"/>
</dbReference>
<dbReference type="SMR" id="Q15NL4"/>
<dbReference type="STRING" id="342610.Patl_4025"/>
<dbReference type="KEGG" id="pat:Patl_4025"/>
<dbReference type="eggNOG" id="COG0787">
    <property type="taxonomic scope" value="Bacteria"/>
</dbReference>
<dbReference type="HOGENOM" id="CLU_028393_1_0_6"/>
<dbReference type="OrthoDB" id="9813814at2"/>
<dbReference type="UniPathway" id="UPA00042">
    <property type="reaction ID" value="UER00497"/>
</dbReference>
<dbReference type="Proteomes" id="UP000001981">
    <property type="component" value="Chromosome"/>
</dbReference>
<dbReference type="GO" id="GO:0005829">
    <property type="term" value="C:cytosol"/>
    <property type="evidence" value="ECO:0007669"/>
    <property type="project" value="TreeGrafter"/>
</dbReference>
<dbReference type="GO" id="GO:0008784">
    <property type="term" value="F:alanine racemase activity"/>
    <property type="evidence" value="ECO:0007669"/>
    <property type="project" value="UniProtKB-UniRule"/>
</dbReference>
<dbReference type="GO" id="GO:0030170">
    <property type="term" value="F:pyridoxal phosphate binding"/>
    <property type="evidence" value="ECO:0007669"/>
    <property type="project" value="UniProtKB-UniRule"/>
</dbReference>
<dbReference type="GO" id="GO:0030632">
    <property type="term" value="P:D-alanine biosynthetic process"/>
    <property type="evidence" value="ECO:0007669"/>
    <property type="project" value="UniProtKB-UniRule"/>
</dbReference>
<dbReference type="CDD" id="cd06827">
    <property type="entry name" value="PLPDE_III_AR_proteobact"/>
    <property type="match status" value="1"/>
</dbReference>
<dbReference type="FunFam" id="3.20.20.10:FF:000002">
    <property type="entry name" value="Alanine racemase"/>
    <property type="match status" value="1"/>
</dbReference>
<dbReference type="Gene3D" id="3.20.20.10">
    <property type="entry name" value="Alanine racemase"/>
    <property type="match status" value="1"/>
</dbReference>
<dbReference type="Gene3D" id="2.40.37.10">
    <property type="entry name" value="Lyase, Ornithine Decarboxylase, Chain A, domain 1"/>
    <property type="match status" value="1"/>
</dbReference>
<dbReference type="HAMAP" id="MF_01201">
    <property type="entry name" value="Ala_racemase"/>
    <property type="match status" value="1"/>
</dbReference>
<dbReference type="InterPro" id="IPR000821">
    <property type="entry name" value="Ala_racemase"/>
</dbReference>
<dbReference type="InterPro" id="IPR009006">
    <property type="entry name" value="Ala_racemase/Decarboxylase_C"/>
</dbReference>
<dbReference type="InterPro" id="IPR011079">
    <property type="entry name" value="Ala_racemase_C"/>
</dbReference>
<dbReference type="InterPro" id="IPR001608">
    <property type="entry name" value="Ala_racemase_N"/>
</dbReference>
<dbReference type="InterPro" id="IPR020622">
    <property type="entry name" value="Ala_racemase_pyridoxalP-BS"/>
</dbReference>
<dbReference type="InterPro" id="IPR029066">
    <property type="entry name" value="PLP-binding_barrel"/>
</dbReference>
<dbReference type="NCBIfam" id="TIGR00492">
    <property type="entry name" value="alr"/>
    <property type="match status" value="1"/>
</dbReference>
<dbReference type="PANTHER" id="PTHR30511">
    <property type="entry name" value="ALANINE RACEMASE"/>
    <property type="match status" value="1"/>
</dbReference>
<dbReference type="PANTHER" id="PTHR30511:SF0">
    <property type="entry name" value="ALANINE RACEMASE, CATABOLIC-RELATED"/>
    <property type="match status" value="1"/>
</dbReference>
<dbReference type="Pfam" id="PF00842">
    <property type="entry name" value="Ala_racemase_C"/>
    <property type="match status" value="1"/>
</dbReference>
<dbReference type="Pfam" id="PF01168">
    <property type="entry name" value="Ala_racemase_N"/>
    <property type="match status" value="1"/>
</dbReference>
<dbReference type="PRINTS" id="PR00992">
    <property type="entry name" value="ALARACEMASE"/>
</dbReference>
<dbReference type="SMART" id="SM01005">
    <property type="entry name" value="Ala_racemase_C"/>
    <property type="match status" value="1"/>
</dbReference>
<dbReference type="SUPFAM" id="SSF50621">
    <property type="entry name" value="Alanine racemase C-terminal domain-like"/>
    <property type="match status" value="1"/>
</dbReference>
<dbReference type="SUPFAM" id="SSF51419">
    <property type="entry name" value="PLP-binding barrel"/>
    <property type="match status" value="1"/>
</dbReference>
<dbReference type="PROSITE" id="PS00395">
    <property type="entry name" value="ALANINE_RACEMASE"/>
    <property type="match status" value="1"/>
</dbReference>
<reference key="1">
    <citation type="submission" date="2006-06" db="EMBL/GenBank/DDBJ databases">
        <title>Complete sequence of Pseudoalteromonas atlantica T6c.</title>
        <authorList>
            <consortium name="US DOE Joint Genome Institute"/>
            <person name="Copeland A."/>
            <person name="Lucas S."/>
            <person name="Lapidus A."/>
            <person name="Barry K."/>
            <person name="Detter J.C."/>
            <person name="Glavina del Rio T."/>
            <person name="Hammon N."/>
            <person name="Israni S."/>
            <person name="Dalin E."/>
            <person name="Tice H."/>
            <person name="Pitluck S."/>
            <person name="Saunders E."/>
            <person name="Brettin T."/>
            <person name="Bruce D."/>
            <person name="Han C."/>
            <person name="Tapia R."/>
            <person name="Gilna P."/>
            <person name="Schmutz J."/>
            <person name="Larimer F."/>
            <person name="Land M."/>
            <person name="Hauser L."/>
            <person name="Kyrpides N."/>
            <person name="Kim E."/>
            <person name="Karls A.C."/>
            <person name="Bartlett D."/>
            <person name="Higgins B.P."/>
            <person name="Richardson P."/>
        </authorList>
    </citation>
    <scope>NUCLEOTIDE SEQUENCE [LARGE SCALE GENOMIC DNA]</scope>
    <source>
        <strain>T6c / ATCC BAA-1087</strain>
    </source>
</reference>
<accession>Q15NL4</accession>
<protein>
    <recommendedName>
        <fullName evidence="1">Alanine racemase</fullName>
        <ecNumber evidence="1">5.1.1.1</ecNumber>
    </recommendedName>
</protein>
<organism>
    <name type="scientific">Pseudoalteromonas atlantica (strain T6c / ATCC BAA-1087)</name>
    <dbReference type="NCBI Taxonomy" id="3042615"/>
    <lineage>
        <taxon>Bacteria</taxon>
        <taxon>Pseudomonadati</taxon>
        <taxon>Pseudomonadota</taxon>
        <taxon>Gammaproteobacteria</taxon>
        <taxon>Alteromonadales</taxon>
        <taxon>Alteromonadaceae</taxon>
        <taxon>Paraglaciecola</taxon>
    </lineage>
</organism>
<name>ALR_PSEA6</name>
<proteinExistence type="inferred from homology"/>
<keyword id="KW-0413">Isomerase</keyword>
<keyword id="KW-0663">Pyridoxal phosphate</keyword>
<sequence>MPRPISITVDLDAIRQNFAYANALGVNALESSINDRQSNTLAVIKADAYGHGAVATARALNGQAALLAVSSIEEAVSLRQHHIKTPILLLEGCFCPSELSVVNELNLQIVIHNQKQIEDLLAQVLTKPIKVWLKVDTGMHRLGIPVSDALKAYTQLASSKNVCSVMLMTHFATSDHPDHPLLLSQIQSIQKLAEKVSAEPSYAGCSLANSAALLATPKSISTWNRPGIMLYGISPFNQSDINVLPLIPAMTFSSKVIALRRVATGESVGYGAIWTAKRPSIIATVAAGYGDGYPRTAKSGTPVMVNGQIAPLAGRVSMDMLCVDVTQLTDISEGSPVELWGKNIPVNDVAAWADTLGYELVTRMPTRAKRVFINE</sequence>
<feature type="chain" id="PRO_1000085504" description="Alanine racemase">
    <location>
        <begin position="1"/>
        <end position="375"/>
    </location>
</feature>
<feature type="active site" description="Proton acceptor; specific for D-alanine" evidence="1">
    <location>
        <position position="45"/>
    </location>
</feature>
<feature type="active site" description="Proton acceptor; specific for L-alanine" evidence="1">
    <location>
        <position position="270"/>
    </location>
</feature>
<feature type="binding site" evidence="1">
    <location>
        <position position="141"/>
    </location>
    <ligand>
        <name>substrate</name>
    </ligand>
</feature>
<feature type="binding site" evidence="1">
    <location>
        <position position="318"/>
    </location>
    <ligand>
        <name>substrate</name>
    </ligand>
</feature>
<feature type="modified residue" description="N6-(pyridoxal phosphate)lysine" evidence="1">
    <location>
        <position position="45"/>
    </location>
</feature>
<comment type="function">
    <text evidence="1">Catalyzes the interconversion of L-alanine and D-alanine. May also act on other amino acids.</text>
</comment>
<comment type="catalytic activity">
    <reaction evidence="1">
        <text>L-alanine = D-alanine</text>
        <dbReference type="Rhea" id="RHEA:20249"/>
        <dbReference type="ChEBI" id="CHEBI:57416"/>
        <dbReference type="ChEBI" id="CHEBI:57972"/>
        <dbReference type="EC" id="5.1.1.1"/>
    </reaction>
</comment>
<comment type="cofactor">
    <cofactor evidence="1">
        <name>pyridoxal 5'-phosphate</name>
        <dbReference type="ChEBI" id="CHEBI:597326"/>
    </cofactor>
</comment>
<comment type="pathway">
    <text evidence="1">Amino-acid biosynthesis; D-alanine biosynthesis; D-alanine from L-alanine: step 1/1.</text>
</comment>
<comment type="similarity">
    <text evidence="1">Belongs to the alanine racemase family.</text>
</comment>
<gene>
    <name type="primary">alr</name>
    <name type="ordered locus">Patl_4025</name>
</gene>
<evidence type="ECO:0000255" key="1">
    <source>
        <dbReference type="HAMAP-Rule" id="MF_01201"/>
    </source>
</evidence>